<organism>
    <name type="scientific">Clostridium perfringens (strain 13 / Type A)</name>
    <dbReference type="NCBI Taxonomy" id="195102"/>
    <lineage>
        <taxon>Bacteria</taxon>
        <taxon>Bacillati</taxon>
        <taxon>Bacillota</taxon>
        <taxon>Clostridia</taxon>
        <taxon>Eubacteriales</taxon>
        <taxon>Clostridiaceae</taxon>
        <taxon>Clostridium</taxon>
    </lineage>
</organism>
<dbReference type="EMBL" id="BA000016">
    <property type="protein sequence ID" value="BAB81461.1"/>
    <property type="molecule type" value="Genomic_DNA"/>
</dbReference>
<dbReference type="RefSeq" id="WP_003458514.1">
    <property type="nucleotide sequence ID" value="NC_003366.1"/>
</dbReference>
<dbReference type="SMR" id="Q8XJK1"/>
<dbReference type="STRING" id="195102.gene:10491019"/>
<dbReference type="GeneID" id="93001708"/>
<dbReference type="KEGG" id="cpe:CPE1755"/>
<dbReference type="HOGENOM" id="CLU_016077_6_2_9"/>
<dbReference type="Proteomes" id="UP000000818">
    <property type="component" value="Chromosome"/>
</dbReference>
<dbReference type="GO" id="GO:0016887">
    <property type="term" value="F:ATP hydrolysis activity"/>
    <property type="evidence" value="ECO:0007669"/>
    <property type="project" value="InterPro"/>
</dbReference>
<dbReference type="GO" id="GO:0005525">
    <property type="term" value="F:GTP binding"/>
    <property type="evidence" value="ECO:0007669"/>
    <property type="project" value="UniProtKB-UniRule"/>
</dbReference>
<dbReference type="GO" id="GO:0043022">
    <property type="term" value="F:ribosome binding"/>
    <property type="evidence" value="ECO:0007669"/>
    <property type="project" value="TreeGrafter"/>
</dbReference>
<dbReference type="GO" id="GO:0042254">
    <property type="term" value="P:ribosome biogenesis"/>
    <property type="evidence" value="ECO:0007669"/>
    <property type="project" value="UniProtKB-KW"/>
</dbReference>
<dbReference type="CDD" id="cd01894">
    <property type="entry name" value="EngA1"/>
    <property type="match status" value="1"/>
</dbReference>
<dbReference type="CDD" id="cd01895">
    <property type="entry name" value="EngA2"/>
    <property type="match status" value="1"/>
</dbReference>
<dbReference type="FunFam" id="3.30.300.20:FF:000004">
    <property type="entry name" value="GTPase Der"/>
    <property type="match status" value="1"/>
</dbReference>
<dbReference type="FunFam" id="3.40.50.300:FF:000040">
    <property type="entry name" value="GTPase Der"/>
    <property type="match status" value="1"/>
</dbReference>
<dbReference type="FunFam" id="3.40.50.300:FF:000057">
    <property type="entry name" value="GTPase Der"/>
    <property type="match status" value="1"/>
</dbReference>
<dbReference type="Gene3D" id="3.30.300.20">
    <property type="match status" value="1"/>
</dbReference>
<dbReference type="Gene3D" id="3.40.50.300">
    <property type="entry name" value="P-loop containing nucleotide triphosphate hydrolases"/>
    <property type="match status" value="2"/>
</dbReference>
<dbReference type="HAMAP" id="MF_00195">
    <property type="entry name" value="GTPase_Der"/>
    <property type="match status" value="1"/>
</dbReference>
<dbReference type="InterPro" id="IPR003593">
    <property type="entry name" value="AAA+_ATPase"/>
</dbReference>
<dbReference type="InterPro" id="IPR031166">
    <property type="entry name" value="G_ENGA"/>
</dbReference>
<dbReference type="InterPro" id="IPR006073">
    <property type="entry name" value="GTP-bd"/>
</dbReference>
<dbReference type="InterPro" id="IPR016484">
    <property type="entry name" value="GTPase_Der"/>
</dbReference>
<dbReference type="InterPro" id="IPR032859">
    <property type="entry name" value="KH_dom-like"/>
</dbReference>
<dbReference type="InterPro" id="IPR015946">
    <property type="entry name" value="KH_dom-like_a/b"/>
</dbReference>
<dbReference type="InterPro" id="IPR027417">
    <property type="entry name" value="P-loop_NTPase"/>
</dbReference>
<dbReference type="InterPro" id="IPR005225">
    <property type="entry name" value="Small_GTP-bd"/>
</dbReference>
<dbReference type="NCBIfam" id="TIGR03594">
    <property type="entry name" value="GTPase_EngA"/>
    <property type="match status" value="1"/>
</dbReference>
<dbReference type="NCBIfam" id="TIGR00231">
    <property type="entry name" value="small_GTP"/>
    <property type="match status" value="2"/>
</dbReference>
<dbReference type="PANTHER" id="PTHR43834">
    <property type="entry name" value="GTPASE DER"/>
    <property type="match status" value="1"/>
</dbReference>
<dbReference type="PANTHER" id="PTHR43834:SF6">
    <property type="entry name" value="GTPASE DER"/>
    <property type="match status" value="1"/>
</dbReference>
<dbReference type="Pfam" id="PF14714">
    <property type="entry name" value="KH_dom-like"/>
    <property type="match status" value="1"/>
</dbReference>
<dbReference type="Pfam" id="PF01926">
    <property type="entry name" value="MMR_HSR1"/>
    <property type="match status" value="2"/>
</dbReference>
<dbReference type="PIRSF" id="PIRSF006485">
    <property type="entry name" value="GTP-binding_EngA"/>
    <property type="match status" value="1"/>
</dbReference>
<dbReference type="PRINTS" id="PR00326">
    <property type="entry name" value="GTP1OBG"/>
</dbReference>
<dbReference type="SMART" id="SM00382">
    <property type="entry name" value="AAA"/>
    <property type="match status" value="2"/>
</dbReference>
<dbReference type="SUPFAM" id="SSF52540">
    <property type="entry name" value="P-loop containing nucleoside triphosphate hydrolases"/>
    <property type="match status" value="2"/>
</dbReference>
<dbReference type="PROSITE" id="PS51712">
    <property type="entry name" value="G_ENGA"/>
    <property type="match status" value="2"/>
</dbReference>
<feature type="chain" id="PRO_0000178985" description="GTPase Der">
    <location>
        <begin position="1"/>
        <end position="438"/>
    </location>
</feature>
<feature type="domain" description="EngA-type G 1">
    <location>
        <begin position="4"/>
        <end position="168"/>
    </location>
</feature>
<feature type="domain" description="EngA-type G 2">
    <location>
        <begin position="177"/>
        <end position="352"/>
    </location>
</feature>
<feature type="domain" description="KH-like" evidence="1">
    <location>
        <begin position="353"/>
        <end position="437"/>
    </location>
</feature>
<feature type="binding site" evidence="1">
    <location>
        <begin position="10"/>
        <end position="17"/>
    </location>
    <ligand>
        <name>GTP</name>
        <dbReference type="ChEBI" id="CHEBI:37565"/>
        <label>1</label>
    </ligand>
</feature>
<feature type="binding site" evidence="1">
    <location>
        <begin position="57"/>
        <end position="61"/>
    </location>
    <ligand>
        <name>GTP</name>
        <dbReference type="ChEBI" id="CHEBI:37565"/>
        <label>1</label>
    </ligand>
</feature>
<feature type="binding site" evidence="1">
    <location>
        <begin position="120"/>
        <end position="123"/>
    </location>
    <ligand>
        <name>GTP</name>
        <dbReference type="ChEBI" id="CHEBI:37565"/>
        <label>1</label>
    </ligand>
</feature>
<feature type="binding site" evidence="1">
    <location>
        <begin position="183"/>
        <end position="190"/>
    </location>
    <ligand>
        <name>GTP</name>
        <dbReference type="ChEBI" id="CHEBI:37565"/>
        <label>2</label>
    </ligand>
</feature>
<feature type="binding site" evidence="1">
    <location>
        <begin position="230"/>
        <end position="234"/>
    </location>
    <ligand>
        <name>GTP</name>
        <dbReference type="ChEBI" id="CHEBI:37565"/>
        <label>2</label>
    </ligand>
</feature>
<feature type="binding site" evidence="1">
    <location>
        <begin position="295"/>
        <end position="298"/>
    </location>
    <ligand>
        <name>GTP</name>
        <dbReference type="ChEBI" id="CHEBI:37565"/>
        <label>2</label>
    </ligand>
</feature>
<reference key="1">
    <citation type="journal article" date="2002" name="Proc. Natl. Acad. Sci. U.S.A.">
        <title>Complete genome sequence of Clostridium perfringens, an anaerobic flesh-eater.</title>
        <authorList>
            <person name="Shimizu T."/>
            <person name="Ohtani K."/>
            <person name="Hirakawa H."/>
            <person name="Ohshima K."/>
            <person name="Yamashita A."/>
            <person name="Shiba T."/>
            <person name="Ogasawara N."/>
            <person name="Hattori M."/>
            <person name="Kuhara S."/>
            <person name="Hayashi H."/>
        </authorList>
    </citation>
    <scope>NUCLEOTIDE SEQUENCE [LARGE SCALE GENOMIC DNA]</scope>
    <source>
        <strain>13 / Type A</strain>
    </source>
</reference>
<gene>
    <name evidence="1" type="primary">der</name>
    <name type="synonym">engA</name>
    <name type="ordered locus">CPE1755</name>
</gene>
<protein>
    <recommendedName>
        <fullName evidence="1">GTPase Der</fullName>
    </recommendedName>
    <alternativeName>
        <fullName evidence="1">GTP-binding protein EngA</fullName>
    </alternativeName>
</protein>
<comment type="function">
    <text evidence="1">GTPase that plays an essential role in the late steps of ribosome biogenesis.</text>
</comment>
<comment type="subunit">
    <text evidence="1">Associates with the 50S ribosomal subunit.</text>
</comment>
<comment type="similarity">
    <text evidence="1">Belongs to the TRAFAC class TrmE-Era-EngA-EngB-Septin-like GTPase superfamily. EngA (Der) GTPase family.</text>
</comment>
<sequence>MSKPIVAMVGRPNVGKSTLFNKLAGKRISIVQDTPGVTRDRVYAESEWLNRKFTMIDTGGIEPESSDIIVKQMRRQAQIAIEMADVIVFVVDGKEGLTAADQEVAQMLRKSKKPVVLVVNKIDRLALEENSYEFYNLGIGDPITISASQGLGLGDMLDEVVKYFNDPSEDEEDDEYIRIAMIGKPNVGKSSLINRLLGEERVIVSNVPGTTRDSIDSYLETEDGKFILVDTAGLRRKSKVKEEIERYSVIRTYAAIEKADVAILVIDAEQGITEQDEKIIGYAHEMNKAIMVVVNKWDLIEKDDKTLSNYQKDLQQKLKFMPYAKYLFISALTGQRVHKILSTAKYCYDNYSKRVSTGLLNDVISKAVLMKEPPVVALKRLKIYYATQVATKPPKFVFFVNDPNLLHFSYGRYLENQLRESFDFDGTGIEIEYRARKE</sequence>
<proteinExistence type="inferred from homology"/>
<evidence type="ECO:0000255" key="1">
    <source>
        <dbReference type="HAMAP-Rule" id="MF_00195"/>
    </source>
</evidence>
<accession>Q8XJK1</accession>
<keyword id="KW-0342">GTP-binding</keyword>
<keyword id="KW-0547">Nucleotide-binding</keyword>
<keyword id="KW-1185">Reference proteome</keyword>
<keyword id="KW-0677">Repeat</keyword>
<keyword id="KW-0690">Ribosome biogenesis</keyword>
<name>DER_CLOPE</name>